<keyword id="KW-0963">Cytoplasm</keyword>
<keyword id="KW-0236">DNA replication inhibitor</keyword>
<keyword id="KW-0238">DNA-binding</keyword>
<keyword id="KW-1185">Reference proteome</keyword>
<organism>
    <name type="scientific">Glaesserella parasuis serovar 5 (strain SH0165)</name>
    <name type="common">Haemophilus parasuis</name>
    <dbReference type="NCBI Taxonomy" id="557723"/>
    <lineage>
        <taxon>Bacteria</taxon>
        <taxon>Pseudomonadati</taxon>
        <taxon>Pseudomonadota</taxon>
        <taxon>Gammaproteobacteria</taxon>
        <taxon>Pasteurellales</taxon>
        <taxon>Pasteurellaceae</taxon>
        <taxon>Glaesserella</taxon>
    </lineage>
</organism>
<proteinExistence type="inferred from homology"/>
<feature type="chain" id="PRO_0000413924" description="Negative modulator of initiation of replication">
    <location>
        <begin position="1"/>
        <end position="186"/>
    </location>
</feature>
<reference key="1">
    <citation type="journal article" date="2009" name="J. Bacteriol.">
        <title>Complete genome sequence of Haemophilus parasuis SH0165.</title>
        <authorList>
            <person name="Yue M."/>
            <person name="Yang F."/>
            <person name="Yang J."/>
            <person name="Bei W."/>
            <person name="Cai X."/>
            <person name="Chen L."/>
            <person name="Dong J."/>
            <person name="Zhou R."/>
            <person name="Jin M."/>
            <person name="Jin Q."/>
            <person name="Chen H."/>
        </authorList>
    </citation>
    <scope>NUCLEOTIDE SEQUENCE [LARGE SCALE GENOMIC DNA]</scope>
    <source>
        <strain>SH0165</strain>
    </source>
</reference>
<gene>
    <name evidence="1" type="primary">seqA</name>
    <name type="ordered locus">HAPS_0384</name>
</gene>
<protein>
    <recommendedName>
        <fullName evidence="1">Negative modulator of initiation of replication</fullName>
    </recommendedName>
</protein>
<comment type="function">
    <text evidence="1">Negative regulator of replication initiation, which contributes to regulation of DNA replication and ensures that replication initiation occurs exactly once per chromosome per cell cycle. Binds to pairs of hemimethylated GATC sequences in the oriC region, thus preventing assembly of replication proteins and re-initiation at newly replicated origins. Repression is relieved when the region becomes fully methylated.</text>
</comment>
<comment type="subunit">
    <text evidence="1">Homodimer. Polymerizes to form helical filaments.</text>
</comment>
<comment type="subcellular location">
    <subcellularLocation>
        <location evidence="1">Cytoplasm</location>
    </subcellularLocation>
</comment>
<comment type="similarity">
    <text evidence="1">Belongs to the SeqA family.</text>
</comment>
<accession>B8F412</accession>
<name>SEQA_GLAP5</name>
<sequence length="186" mass="21179">MKTIEVDDELYHYIASRTQAIGESASDILRRLLRLPASPQPFVLVQENMINELKDLAKLPKQKKQLHQQDKVIKQVEFVLASSLFNNETKGVNRFLYLLSALYKADPESFSHATENVQGSERIYFARDEQTILATGSSVKAKQIPESPFWVITNNNTERKGIILCALMNAMELPEELVARIKAQFN</sequence>
<dbReference type="EMBL" id="CP001321">
    <property type="protein sequence ID" value="ACL32064.1"/>
    <property type="molecule type" value="Genomic_DNA"/>
</dbReference>
<dbReference type="RefSeq" id="WP_010786771.1">
    <property type="nucleotide sequence ID" value="NC_011852.1"/>
</dbReference>
<dbReference type="SMR" id="B8F412"/>
<dbReference type="STRING" id="557723.HAPS_0384"/>
<dbReference type="KEGG" id="hap:HAPS_0384"/>
<dbReference type="PATRIC" id="fig|557723.8.peg.390"/>
<dbReference type="HOGENOM" id="CLU_099733_0_0_6"/>
<dbReference type="Proteomes" id="UP000006743">
    <property type="component" value="Chromosome"/>
</dbReference>
<dbReference type="GO" id="GO:0005737">
    <property type="term" value="C:cytoplasm"/>
    <property type="evidence" value="ECO:0007669"/>
    <property type="project" value="UniProtKB-SubCell"/>
</dbReference>
<dbReference type="GO" id="GO:0003677">
    <property type="term" value="F:DNA binding"/>
    <property type="evidence" value="ECO:0007669"/>
    <property type="project" value="UniProtKB-UniRule"/>
</dbReference>
<dbReference type="GO" id="GO:0032297">
    <property type="term" value="P:negative regulation of DNA-templated DNA replication initiation"/>
    <property type="evidence" value="ECO:0007669"/>
    <property type="project" value="UniProtKB-UniRule"/>
</dbReference>
<dbReference type="GO" id="GO:0006355">
    <property type="term" value="P:regulation of DNA-templated transcription"/>
    <property type="evidence" value="ECO:0007669"/>
    <property type="project" value="InterPro"/>
</dbReference>
<dbReference type="Gene3D" id="1.10.1220.10">
    <property type="entry name" value="Met repressor-like"/>
    <property type="match status" value="1"/>
</dbReference>
<dbReference type="Gene3D" id="1.20.1380.10">
    <property type="entry name" value="Replication modulator SeqA, C-terminal DNA-binding domain"/>
    <property type="match status" value="1"/>
</dbReference>
<dbReference type="HAMAP" id="MF_00908">
    <property type="entry name" value="SeqA"/>
    <property type="match status" value="1"/>
</dbReference>
<dbReference type="InterPro" id="IPR013321">
    <property type="entry name" value="Arc_rbn_hlx_hlx"/>
</dbReference>
<dbReference type="InterPro" id="IPR010985">
    <property type="entry name" value="Ribbon_hlx_hlx"/>
</dbReference>
<dbReference type="InterPro" id="IPR005621">
    <property type="entry name" value="SeqA"/>
</dbReference>
<dbReference type="InterPro" id="IPR026577">
    <property type="entry name" value="SeqA_DNA-bd_C"/>
</dbReference>
<dbReference type="InterPro" id="IPR036835">
    <property type="entry name" value="SeqA_DNA-bd_C_sf"/>
</dbReference>
<dbReference type="InterPro" id="IPR033761">
    <property type="entry name" value="SeqA_N"/>
</dbReference>
<dbReference type="NCBIfam" id="NF008389">
    <property type="entry name" value="PRK11187.1"/>
    <property type="match status" value="1"/>
</dbReference>
<dbReference type="Pfam" id="PF03925">
    <property type="entry name" value="SeqA"/>
    <property type="match status" value="1"/>
</dbReference>
<dbReference type="Pfam" id="PF17206">
    <property type="entry name" value="SeqA_N"/>
    <property type="match status" value="1"/>
</dbReference>
<dbReference type="PIRSF" id="PIRSF019401">
    <property type="entry name" value="SeqA"/>
    <property type="match status" value="1"/>
</dbReference>
<dbReference type="SUPFAM" id="SSF82808">
    <property type="entry name" value="Replication modulator SeqA, C-terminal DNA-binding domain"/>
    <property type="match status" value="1"/>
</dbReference>
<dbReference type="SUPFAM" id="SSF47598">
    <property type="entry name" value="Ribbon-helix-helix"/>
    <property type="match status" value="1"/>
</dbReference>
<evidence type="ECO:0000255" key="1">
    <source>
        <dbReference type="HAMAP-Rule" id="MF_00908"/>
    </source>
</evidence>